<keyword id="KW-0056">Arginine metabolism</keyword>
<keyword id="KW-0963">Cytoplasm</keyword>
<keyword id="KW-0378">Hydrolase</keyword>
<keyword id="KW-1185">Reference proteome</keyword>
<proteinExistence type="inferred from homology"/>
<evidence type="ECO:0000255" key="1">
    <source>
        <dbReference type="HAMAP-Rule" id="MF_00242"/>
    </source>
</evidence>
<sequence>MSSHPIQVFSEIGKLKKVMLHRPGKELENLLPDYLERLLFDDIPFLEDAQKEHDAFAQALRDEGIEVLYLEQLAAESLTSPEIRDQFIEEYLDEANIRDRQTKVAIRELLHGIKDNQELVEKTMAGIQKVELPEIPDEAKDLTDLVESEYPFAIDPMPNLYFTRDPFATIGNAVSLNHMFADTRNRETLYGKYIFKYHPIYGGKVDLVYNREEDTRIEGGDELVLSKDVLAVGISQRTDAASIEKLLVNIFKKNVGFKKVLAFEFANNRKFMHLDTVFTMVDYDKFTIHPEIEGDLHVYSVTYENEKLKIVEEKGDLAELLAQNLGVEKVHLIRCGGGNIVAAAREQWNDGSNTLTIAPGVVVVYDRNTVTNKILEEYGLRLIKIRGSELVRGRGGPRCMSMPFEREEV</sequence>
<accession>Q97NA4</accession>
<reference key="1">
    <citation type="journal article" date="2001" name="Science">
        <title>Complete genome sequence of a virulent isolate of Streptococcus pneumoniae.</title>
        <authorList>
            <person name="Tettelin H."/>
            <person name="Nelson K.E."/>
            <person name="Paulsen I.T."/>
            <person name="Eisen J.A."/>
            <person name="Read T.D."/>
            <person name="Peterson S.N."/>
            <person name="Heidelberg J.F."/>
            <person name="DeBoy R.T."/>
            <person name="Haft D.H."/>
            <person name="Dodson R.J."/>
            <person name="Durkin A.S."/>
            <person name="Gwinn M.L."/>
            <person name="Kolonay J.F."/>
            <person name="Nelson W.C."/>
            <person name="Peterson J.D."/>
            <person name="Umayam L.A."/>
            <person name="White O."/>
            <person name="Salzberg S.L."/>
            <person name="Lewis M.R."/>
            <person name="Radune D."/>
            <person name="Holtzapple E.K."/>
            <person name="Khouri H.M."/>
            <person name="Wolf A.M."/>
            <person name="Utterback T.R."/>
            <person name="Hansen C.L."/>
            <person name="McDonald L.A."/>
            <person name="Feldblyum T.V."/>
            <person name="Angiuoli S.V."/>
            <person name="Dickinson T."/>
            <person name="Hickey E.K."/>
            <person name="Holt I.E."/>
            <person name="Loftus B.J."/>
            <person name="Yang F."/>
            <person name="Smith H.O."/>
            <person name="Venter J.C."/>
            <person name="Dougherty B.A."/>
            <person name="Morrison D.A."/>
            <person name="Hollingshead S.K."/>
            <person name="Fraser C.M."/>
        </authorList>
    </citation>
    <scope>NUCLEOTIDE SEQUENCE [LARGE SCALE GENOMIC DNA]</scope>
    <source>
        <strain>ATCC BAA-334 / TIGR4</strain>
    </source>
</reference>
<dbReference type="EC" id="3.5.3.6" evidence="1"/>
<dbReference type="EMBL" id="AE005672">
    <property type="protein sequence ID" value="AAK76205.1"/>
    <property type="molecule type" value="Genomic_DNA"/>
</dbReference>
<dbReference type="PIR" id="D95251">
    <property type="entry name" value="D95251"/>
</dbReference>
<dbReference type="RefSeq" id="WP_000094620.1">
    <property type="nucleotide sequence ID" value="NZ_CP155539.1"/>
</dbReference>
<dbReference type="SMR" id="Q97NA4"/>
<dbReference type="PaxDb" id="170187-SP_2148"/>
<dbReference type="EnsemblBacteria" id="AAK76205">
    <property type="protein sequence ID" value="AAK76205"/>
    <property type="gene ID" value="SP_2148"/>
</dbReference>
<dbReference type="KEGG" id="spn:SP_2148"/>
<dbReference type="eggNOG" id="COG2235">
    <property type="taxonomic scope" value="Bacteria"/>
</dbReference>
<dbReference type="PhylomeDB" id="Q97NA4"/>
<dbReference type="BioCyc" id="SPNE170187:G1FZB-2240-MONOMER"/>
<dbReference type="UniPathway" id="UPA00254">
    <property type="reaction ID" value="UER00364"/>
</dbReference>
<dbReference type="PHI-base" id="PHI:3473"/>
<dbReference type="Proteomes" id="UP000000585">
    <property type="component" value="Chromosome"/>
</dbReference>
<dbReference type="GO" id="GO:0005737">
    <property type="term" value="C:cytoplasm"/>
    <property type="evidence" value="ECO:0007669"/>
    <property type="project" value="UniProtKB-SubCell"/>
</dbReference>
<dbReference type="GO" id="GO:0016990">
    <property type="term" value="F:arginine deiminase activity"/>
    <property type="evidence" value="ECO:0007669"/>
    <property type="project" value="UniProtKB-UniRule"/>
</dbReference>
<dbReference type="GO" id="GO:0019547">
    <property type="term" value="P:arginine catabolic process to ornithine"/>
    <property type="evidence" value="ECO:0007669"/>
    <property type="project" value="UniProtKB-UniRule"/>
</dbReference>
<dbReference type="GO" id="GO:0019546">
    <property type="term" value="P:arginine deiminase pathway"/>
    <property type="evidence" value="ECO:0007669"/>
    <property type="project" value="TreeGrafter"/>
</dbReference>
<dbReference type="FunFam" id="1.10.3930.10:FF:000003">
    <property type="entry name" value="Arginine deiminase"/>
    <property type="match status" value="1"/>
</dbReference>
<dbReference type="Gene3D" id="1.10.3930.10">
    <property type="entry name" value="Arginine deiminase"/>
    <property type="match status" value="1"/>
</dbReference>
<dbReference type="Gene3D" id="3.75.10.10">
    <property type="entry name" value="L-arginine/glycine Amidinotransferase, Chain A"/>
    <property type="match status" value="1"/>
</dbReference>
<dbReference type="HAMAP" id="MF_00242">
    <property type="entry name" value="Arg_deiminase"/>
    <property type="match status" value="1"/>
</dbReference>
<dbReference type="InterPro" id="IPR003876">
    <property type="entry name" value="Arg_deiminase"/>
</dbReference>
<dbReference type="NCBIfam" id="TIGR01078">
    <property type="entry name" value="arcA"/>
    <property type="match status" value="1"/>
</dbReference>
<dbReference type="NCBIfam" id="NF002381">
    <property type="entry name" value="PRK01388.1"/>
    <property type="match status" value="1"/>
</dbReference>
<dbReference type="PANTHER" id="PTHR47271">
    <property type="entry name" value="ARGININE DEIMINASE"/>
    <property type="match status" value="1"/>
</dbReference>
<dbReference type="PANTHER" id="PTHR47271:SF2">
    <property type="entry name" value="ARGININE DEIMINASE"/>
    <property type="match status" value="1"/>
</dbReference>
<dbReference type="Pfam" id="PF02274">
    <property type="entry name" value="ADI"/>
    <property type="match status" value="1"/>
</dbReference>
<dbReference type="PIRSF" id="PIRSF006356">
    <property type="entry name" value="Arg_deiminase"/>
    <property type="match status" value="1"/>
</dbReference>
<dbReference type="PRINTS" id="PR01466">
    <property type="entry name" value="ARGDEIMINASE"/>
</dbReference>
<dbReference type="SUPFAM" id="SSF55909">
    <property type="entry name" value="Pentein"/>
    <property type="match status" value="1"/>
</dbReference>
<gene>
    <name evidence="1" type="primary">arcA</name>
    <name type="ordered locus">SP_2148</name>
</gene>
<feature type="chain" id="PRO_0000182246" description="Arginine deiminase">
    <location>
        <begin position="1"/>
        <end position="409"/>
    </location>
</feature>
<feature type="active site" description="Amidino-cysteine intermediate" evidence="1">
    <location>
        <position position="399"/>
    </location>
</feature>
<protein>
    <recommendedName>
        <fullName evidence="1">Arginine deiminase</fullName>
        <shortName evidence="1">ADI</shortName>
        <ecNumber evidence="1">3.5.3.6</ecNumber>
    </recommendedName>
    <alternativeName>
        <fullName evidence="1">Arginine dihydrolase</fullName>
        <shortName evidence="1">AD</shortName>
    </alternativeName>
</protein>
<name>ARCA_STRPN</name>
<comment type="catalytic activity">
    <reaction evidence="1">
        <text>L-arginine + H2O = L-citrulline + NH4(+)</text>
        <dbReference type="Rhea" id="RHEA:19597"/>
        <dbReference type="ChEBI" id="CHEBI:15377"/>
        <dbReference type="ChEBI" id="CHEBI:28938"/>
        <dbReference type="ChEBI" id="CHEBI:32682"/>
        <dbReference type="ChEBI" id="CHEBI:57743"/>
        <dbReference type="EC" id="3.5.3.6"/>
    </reaction>
</comment>
<comment type="pathway">
    <text evidence="1">Amino-acid degradation; L-arginine degradation via ADI pathway; carbamoyl phosphate from L-arginine: step 1/2.</text>
</comment>
<comment type="subcellular location">
    <subcellularLocation>
        <location evidence="1">Cytoplasm</location>
    </subcellularLocation>
</comment>
<comment type="similarity">
    <text evidence="1">Belongs to the arginine deiminase family.</text>
</comment>
<organism>
    <name type="scientific">Streptococcus pneumoniae serotype 4 (strain ATCC BAA-334 / TIGR4)</name>
    <dbReference type="NCBI Taxonomy" id="170187"/>
    <lineage>
        <taxon>Bacteria</taxon>
        <taxon>Bacillati</taxon>
        <taxon>Bacillota</taxon>
        <taxon>Bacilli</taxon>
        <taxon>Lactobacillales</taxon>
        <taxon>Streptococcaceae</taxon>
        <taxon>Streptococcus</taxon>
    </lineage>
</organism>